<proteinExistence type="inferred from homology"/>
<dbReference type="EMBL" id="AY446894">
    <property type="protein sequence ID" value="AAR31656.1"/>
    <property type="molecule type" value="Genomic_DNA"/>
</dbReference>
<dbReference type="RefSeq" id="YP_081552.1">
    <property type="nucleotide sequence ID" value="NC_006273.2"/>
</dbReference>
<dbReference type="SMR" id="F5HC71"/>
<dbReference type="GlyCosmos" id="F5HC71">
    <property type="glycosylation" value="1 site, No reported glycans"/>
</dbReference>
<dbReference type="GeneID" id="3077506"/>
<dbReference type="KEGG" id="vg:3077506"/>
<dbReference type="Reactome" id="R-HSA-9609690">
    <property type="pathway name" value="HCMV Early Events"/>
</dbReference>
<dbReference type="Reactome" id="R-HSA-9610379">
    <property type="pathway name" value="HCMV Late Events"/>
</dbReference>
<dbReference type="Proteomes" id="UP000000938">
    <property type="component" value="Segment"/>
</dbReference>
<dbReference type="GO" id="GO:0005615">
    <property type="term" value="C:extracellular space"/>
    <property type="evidence" value="ECO:0007669"/>
    <property type="project" value="UniProtKB-KW"/>
</dbReference>
<dbReference type="GO" id="GO:0005125">
    <property type="term" value="F:cytokine activity"/>
    <property type="evidence" value="ECO:0007669"/>
    <property type="project" value="UniProtKB-KW"/>
</dbReference>
<dbReference type="GO" id="GO:0006955">
    <property type="term" value="P:immune response"/>
    <property type="evidence" value="ECO:0007669"/>
    <property type="project" value="InterPro"/>
</dbReference>
<dbReference type="GO" id="GO:0039673">
    <property type="term" value="P:symbiont-mediated suppression of host dendritic cell mediated immune response"/>
    <property type="evidence" value="ECO:0007669"/>
    <property type="project" value="UniProtKB-KW"/>
</dbReference>
<dbReference type="GO" id="GO:0052170">
    <property type="term" value="P:symbiont-mediated suppression of host innate immune response"/>
    <property type="evidence" value="ECO:0007669"/>
    <property type="project" value="UniProtKB-KW"/>
</dbReference>
<dbReference type="GO" id="GO:0039502">
    <property type="term" value="P:symbiont-mediated suppression of host type I interferon-mediated signaling pathway"/>
    <property type="evidence" value="ECO:0007669"/>
    <property type="project" value="UniProtKB-KW"/>
</dbReference>
<dbReference type="Gene3D" id="1.20.1250.10">
    <property type="match status" value="1"/>
</dbReference>
<dbReference type="Gene3D" id="4.10.340.10">
    <property type="entry name" value="Interleukin-10, domain 2"/>
    <property type="match status" value="1"/>
</dbReference>
<dbReference type="InterPro" id="IPR009079">
    <property type="entry name" value="4_helix_cytokine-like_core"/>
</dbReference>
<dbReference type="InterPro" id="IPR020443">
    <property type="entry name" value="IL-10/19/20/24/26"/>
</dbReference>
<dbReference type="InterPro" id="IPR012352">
    <property type="entry name" value="IL-10_add_hlx"/>
</dbReference>
<dbReference type="InterPro" id="IPR020423">
    <property type="entry name" value="IL-10_CS"/>
</dbReference>
<dbReference type="PANTHER" id="PTHR48482:SF5">
    <property type="entry name" value="INTERLEUKIN-10"/>
    <property type="match status" value="1"/>
</dbReference>
<dbReference type="PANTHER" id="PTHR48482">
    <property type="entry name" value="INTERLEUKIN-19-RELATED"/>
    <property type="match status" value="1"/>
</dbReference>
<dbReference type="Pfam" id="PF00726">
    <property type="entry name" value="IL10"/>
    <property type="match status" value="1"/>
</dbReference>
<dbReference type="SMART" id="SM00188">
    <property type="entry name" value="IL10"/>
    <property type="match status" value="1"/>
</dbReference>
<dbReference type="SUPFAM" id="SSF47266">
    <property type="entry name" value="4-helical cytokines"/>
    <property type="match status" value="1"/>
</dbReference>
<dbReference type="PROSITE" id="PS00520">
    <property type="entry name" value="INTERLEUKIN_10"/>
    <property type="match status" value="1"/>
</dbReference>
<protein>
    <recommendedName>
        <fullName>Viral interleukin-10 homolog</fullName>
        <shortName>cmvIL-10</shortName>
        <shortName>vIL-10</shortName>
    </recommendedName>
</protein>
<feature type="signal peptide" evidence="2">
    <location>
        <begin position="1"/>
        <end position="25"/>
    </location>
</feature>
<feature type="chain" id="PRO_0000416438" description="Viral interleukin-10 homolog">
    <location>
        <begin position="26"/>
        <end position="176"/>
    </location>
</feature>
<feature type="glycosylation site" description="N-linked (GlcNAc...) asparagine; by host" evidence="2">
    <location>
        <position position="152"/>
    </location>
</feature>
<feature type="disulfide bond" evidence="1">
    <location>
        <begin position="38"/>
        <end position="128"/>
    </location>
</feature>
<feature type="disulfide bond" description="Interchain" evidence="1">
    <location>
        <position position="79"/>
    </location>
</feature>
<feature type="disulfide bond" evidence="1">
    <location>
        <begin position="82"/>
        <end position="133"/>
    </location>
</feature>
<organismHost>
    <name type="scientific">Homo sapiens</name>
    <name type="common">Human</name>
    <dbReference type="NCBI Taxonomy" id="9606"/>
</organismHost>
<accession>F5HC71</accession>
<keyword id="KW-0202">Cytokine</keyword>
<keyword id="KW-1015">Disulfide bond</keyword>
<keyword id="KW-1125">Evasion of host immunity by viral interleukin-like protein</keyword>
<keyword id="KW-0325">Glycoprotein</keyword>
<keyword id="KW-0945">Host-virus interaction</keyword>
<keyword id="KW-1090">Inhibition of host innate immune response by virus</keyword>
<keyword id="KW-1114">Inhibition of host interferon signaling pathway by virus</keyword>
<keyword id="KW-0922">Interferon antiviral system evasion</keyword>
<keyword id="KW-1118">Modulation of host dendritic cell activity by virus</keyword>
<keyword id="KW-1185">Reference proteome</keyword>
<keyword id="KW-0964">Secreted</keyword>
<keyword id="KW-0732">Signal</keyword>
<keyword id="KW-0899">Viral immunoevasion</keyword>
<comment type="function">
    <text evidence="1">Functional viral IL-10 homolog. Can bind to the human IL-10 receptor and compete with human IL-10 for binding sites. Requires both subunits of the human IL-10 receptor complex to induce signal transduction events and biological activities. IL-10 signaling pathway has several immunosuppressive activities that are exploited by the virus. Inhibits TLR-induced type I interferon production in host plasmacytoid dendritic cells (By similarity).</text>
</comment>
<comment type="subunit">
    <text evidence="1">Homodimer; disulfide-linked.</text>
</comment>
<comment type="subcellular location">
    <subcellularLocation>
        <location evidence="1">Secreted</location>
    </subcellularLocation>
</comment>
<comment type="similarity">
    <text evidence="3">Belongs to the IL-10 family.</text>
</comment>
<gene>
    <name type="primary">UL111A</name>
</gene>
<sequence length="176" mass="20108">MLSVMVSSSLVLIVFFLGASEEAKPATTTTIKNTKPQCRPEDYATRLQDLRVTFHRVKPTLQREDDYSVWLDGTVVKGCWGCSVMDWLLRRYLEIVFPAGDHVYPGLKTELHSMRSTLESIYKDMRQCPLLGCGDKSVISRLSQEAERKSDNGTRKGLSELDTLFSRLEEYLHSRK</sequence>
<evidence type="ECO:0000250" key="1"/>
<evidence type="ECO:0000255" key="2"/>
<evidence type="ECO:0000305" key="3"/>
<organism>
    <name type="scientific">Human cytomegalovirus (strain Merlin)</name>
    <name type="common">HHV-5</name>
    <name type="synonym">Human herpesvirus 5</name>
    <dbReference type="NCBI Taxonomy" id="295027"/>
    <lineage>
        <taxon>Viruses</taxon>
        <taxon>Duplodnaviria</taxon>
        <taxon>Heunggongvirae</taxon>
        <taxon>Peploviricota</taxon>
        <taxon>Herviviricetes</taxon>
        <taxon>Herpesvirales</taxon>
        <taxon>Orthoherpesviridae</taxon>
        <taxon>Betaherpesvirinae</taxon>
        <taxon>Cytomegalovirus</taxon>
        <taxon>Cytomegalovirus humanbeta5</taxon>
        <taxon>Human cytomegalovirus</taxon>
    </lineage>
</organism>
<name>IL10H_HCMVM</name>
<reference key="1">
    <citation type="journal article" date="2003" name="J. Gen. Virol.">
        <title>Two novel spliced genes in human cytomegalovirus.</title>
        <authorList>
            <person name="Akter P."/>
            <person name="Cunningham C."/>
            <person name="McSharry B.P."/>
            <person name="Dolan A."/>
            <person name="Addison C."/>
            <person name="Dargan D.J."/>
            <person name="Hassan-Walker A.F."/>
            <person name="Emery V.C."/>
            <person name="Griffiths P.D."/>
            <person name="Wilkinson G.W."/>
            <person name="Davison A.J."/>
        </authorList>
    </citation>
    <scope>NUCLEOTIDE SEQUENCE [LARGE SCALE GENOMIC DNA]</scope>
    <source>
        <strain>Merlin</strain>
    </source>
</reference>
<reference key="2">
    <citation type="journal article" date="2004" name="J. Gen. Virol.">
        <title>Genetic content of wild-type human cytomegalovirus.</title>
        <authorList>
            <person name="Dolan A."/>
            <person name="Cunningham C."/>
            <person name="Hector R.D."/>
            <person name="Hassan-Walker A.F."/>
            <person name="Lee L."/>
            <person name="Addison C."/>
            <person name="Dargan D.J."/>
            <person name="McGeoch D.J."/>
            <person name="Gatherer D."/>
            <person name="Emery V.C."/>
            <person name="Griffiths P.D."/>
            <person name="Sinzger C."/>
            <person name="McSharry B.P."/>
            <person name="Wilkinson G.W.G."/>
            <person name="Davison A.J."/>
        </authorList>
    </citation>
    <scope>NUCLEOTIDE SEQUENCE [LARGE SCALE GENOMIC DNA]</scope>
</reference>